<keyword id="KW-0378">Hydrolase</keyword>
<keyword id="KW-0496">Mitochondrion</keyword>
<keyword id="KW-1185">Reference proteome</keyword>
<organism>
    <name type="scientific">Schizosaccharomyces pombe (strain 972 / ATCC 24843)</name>
    <name type="common">Fission yeast</name>
    <dbReference type="NCBI Taxonomy" id="284812"/>
    <lineage>
        <taxon>Eukaryota</taxon>
        <taxon>Fungi</taxon>
        <taxon>Dikarya</taxon>
        <taxon>Ascomycota</taxon>
        <taxon>Taphrinomycotina</taxon>
        <taxon>Schizosaccharomycetes</taxon>
        <taxon>Schizosaccharomycetales</taxon>
        <taxon>Schizosaccharomycetaceae</taxon>
        <taxon>Schizosaccharomyces</taxon>
    </lineage>
</organism>
<reference evidence="6" key="1">
    <citation type="journal article" date="2002" name="Nature">
        <title>The genome sequence of Schizosaccharomyces pombe.</title>
        <authorList>
            <person name="Wood V."/>
            <person name="Gwilliam R."/>
            <person name="Rajandream M.A."/>
            <person name="Lyne M.H."/>
            <person name="Lyne R."/>
            <person name="Stewart A."/>
            <person name="Sgouros J.G."/>
            <person name="Peat N."/>
            <person name="Hayles J."/>
            <person name="Baker S.G."/>
            <person name="Basham D."/>
            <person name="Bowman S."/>
            <person name="Brooks K."/>
            <person name="Brown D."/>
            <person name="Brown S."/>
            <person name="Chillingworth T."/>
            <person name="Churcher C.M."/>
            <person name="Collins M."/>
            <person name="Connor R."/>
            <person name="Cronin A."/>
            <person name="Davis P."/>
            <person name="Feltwell T."/>
            <person name="Fraser A."/>
            <person name="Gentles S."/>
            <person name="Goble A."/>
            <person name="Hamlin N."/>
            <person name="Harris D.E."/>
            <person name="Hidalgo J."/>
            <person name="Hodgson G."/>
            <person name="Holroyd S."/>
            <person name="Hornsby T."/>
            <person name="Howarth S."/>
            <person name="Huckle E.J."/>
            <person name="Hunt S."/>
            <person name="Jagels K."/>
            <person name="James K.D."/>
            <person name="Jones L."/>
            <person name="Jones M."/>
            <person name="Leather S."/>
            <person name="McDonald S."/>
            <person name="McLean J."/>
            <person name="Mooney P."/>
            <person name="Moule S."/>
            <person name="Mungall K.L."/>
            <person name="Murphy L.D."/>
            <person name="Niblett D."/>
            <person name="Odell C."/>
            <person name="Oliver K."/>
            <person name="O'Neil S."/>
            <person name="Pearson D."/>
            <person name="Quail M.A."/>
            <person name="Rabbinowitsch E."/>
            <person name="Rutherford K.M."/>
            <person name="Rutter S."/>
            <person name="Saunders D."/>
            <person name="Seeger K."/>
            <person name="Sharp S."/>
            <person name="Skelton J."/>
            <person name="Simmonds M.N."/>
            <person name="Squares R."/>
            <person name="Squares S."/>
            <person name="Stevens K."/>
            <person name="Taylor K."/>
            <person name="Taylor R.G."/>
            <person name="Tivey A."/>
            <person name="Walsh S.V."/>
            <person name="Warren T."/>
            <person name="Whitehead S."/>
            <person name="Woodward J.R."/>
            <person name="Volckaert G."/>
            <person name="Aert R."/>
            <person name="Robben J."/>
            <person name="Grymonprez B."/>
            <person name="Weltjens I."/>
            <person name="Vanstreels E."/>
            <person name="Rieger M."/>
            <person name="Schaefer M."/>
            <person name="Mueller-Auer S."/>
            <person name="Gabel C."/>
            <person name="Fuchs M."/>
            <person name="Duesterhoeft A."/>
            <person name="Fritzc C."/>
            <person name="Holzer E."/>
            <person name="Moestl D."/>
            <person name="Hilbert H."/>
            <person name="Borzym K."/>
            <person name="Langer I."/>
            <person name="Beck A."/>
            <person name="Lehrach H."/>
            <person name="Reinhardt R."/>
            <person name="Pohl T.M."/>
            <person name="Eger P."/>
            <person name="Zimmermann W."/>
            <person name="Wedler H."/>
            <person name="Wambutt R."/>
            <person name="Purnelle B."/>
            <person name="Goffeau A."/>
            <person name="Cadieu E."/>
            <person name="Dreano S."/>
            <person name="Gloux S."/>
            <person name="Lelaure V."/>
            <person name="Mottier S."/>
            <person name="Galibert F."/>
            <person name="Aves S.J."/>
            <person name="Xiang Z."/>
            <person name="Hunt C."/>
            <person name="Moore K."/>
            <person name="Hurst S.M."/>
            <person name="Lucas M."/>
            <person name="Rochet M."/>
            <person name="Gaillardin C."/>
            <person name="Tallada V.A."/>
            <person name="Garzon A."/>
            <person name="Thode G."/>
            <person name="Daga R.R."/>
            <person name="Cruzado L."/>
            <person name="Jimenez J."/>
            <person name="Sanchez M."/>
            <person name="del Rey F."/>
            <person name="Benito J."/>
            <person name="Dominguez A."/>
            <person name="Revuelta J.L."/>
            <person name="Moreno S."/>
            <person name="Armstrong J."/>
            <person name="Forsburg S.L."/>
            <person name="Cerutti L."/>
            <person name="Lowe T."/>
            <person name="McCombie W.R."/>
            <person name="Paulsen I."/>
            <person name="Potashkin J."/>
            <person name="Shpakovski G.V."/>
            <person name="Ussery D."/>
            <person name="Barrell B.G."/>
            <person name="Nurse P."/>
        </authorList>
    </citation>
    <scope>NUCLEOTIDE SEQUENCE [LARGE SCALE GENOMIC DNA]</scope>
    <source>
        <strain>972 / ATCC 24843</strain>
    </source>
</reference>
<reference evidence="5" key="2">
    <citation type="journal article" date="2006" name="Nat. Biotechnol.">
        <title>ORFeome cloning and global analysis of protein localization in the fission yeast Schizosaccharomyces pombe.</title>
        <authorList>
            <person name="Matsuyama A."/>
            <person name="Arai R."/>
            <person name="Yashiroda Y."/>
            <person name="Shirai A."/>
            <person name="Kamata A."/>
            <person name="Sekido S."/>
            <person name="Kobayashi Y."/>
            <person name="Hashimoto A."/>
            <person name="Hamamoto M."/>
            <person name="Hiraoka Y."/>
            <person name="Horinouchi S."/>
            <person name="Yoshida M."/>
        </authorList>
    </citation>
    <scope>SUBCELLULAR LOCATION [LARGE SCALE ANALYSIS]</scope>
</reference>
<name>PPA4_SCHPO</name>
<sequence length="462" mass="51976">MSQMSSASVKFPDSVPGVDYPKQLQLKYLQVIFRHGERAPVKERLGSAGIPKDWKLCNNARRFFAQIKGEKEWSVLGFERKVESPVDTSLAAPTSDNSPSGVCIHGELTDFGRVTTRTLGEYLRERYVKQLKFLPDELNNYADVYMRATPMVRALESLEHVFSGLYPESKRKMGLPVIFTRNWSDENLLPNENNCPRLVQLYEEFAERAAKLYDPLLAGRASEMMSQFMNGQPVRVVSSHPRLSGLLDTINAAIGSHVDFNPNLRDEQWLRDAETAVVEEWFGGYKVSKLMRQLGAGSLLNDLSMRMENFVVAEKNGSPYHRLALYGAHDVTIAAILASLDAFDYRWPPFTSHLEMELFEDTSSKSDSQNQSGDNKTTDLKLFSDESTDASNSAIVAASNSARDMSDWYVRITYNSTPVVMGACRGQGYKGNDTICPLSIFKDTVRALKPVEYHTMCKPVKK</sequence>
<comment type="catalytic activity">
    <reaction evidence="2">
        <text>a phosphate monoester + H2O = an alcohol + phosphate</text>
        <dbReference type="Rhea" id="RHEA:15017"/>
        <dbReference type="ChEBI" id="CHEBI:15377"/>
        <dbReference type="ChEBI" id="CHEBI:30879"/>
        <dbReference type="ChEBI" id="CHEBI:43474"/>
        <dbReference type="ChEBI" id="CHEBI:67140"/>
        <dbReference type="EC" id="3.1.3.2"/>
    </reaction>
</comment>
<comment type="subcellular location">
    <subcellularLocation>
        <location evidence="4">Mitochondrion</location>
    </subcellularLocation>
</comment>
<comment type="similarity">
    <text evidence="3">Belongs to the histidine acid phosphatase family.</text>
</comment>
<accession>Q9USS6</accession>
<feature type="chain" id="PRO_0000311719" description="Probable acid phosphatase SPBC4.06">
    <location>
        <begin position="1"/>
        <end position="462"/>
    </location>
</feature>
<feature type="active site" description="Nucleophile" evidence="2">
    <location>
        <position position="35"/>
    </location>
</feature>
<feature type="active site" description="Proton donor" evidence="1">
    <location>
        <position position="330"/>
    </location>
</feature>
<dbReference type="EC" id="3.1.3.2"/>
<dbReference type="EMBL" id="CU329671">
    <property type="protein sequence ID" value="CAB58405.1"/>
    <property type="molecule type" value="Genomic_DNA"/>
</dbReference>
<dbReference type="PIR" id="T40420">
    <property type="entry name" value="T40420"/>
</dbReference>
<dbReference type="RefSeq" id="NP_595479.1">
    <property type="nucleotide sequence ID" value="NM_001021390.2"/>
</dbReference>
<dbReference type="SMR" id="Q9USS6"/>
<dbReference type="FunCoup" id="Q9USS6">
    <property type="interactions" value="45"/>
</dbReference>
<dbReference type="STRING" id="284812.Q9USS6"/>
<dbReference type="iPTMnet" id="Q9USS6"/>
<dbReference type="PaxDb" id="4896-SPBC4.06.1"/>
<dbReference type="EnsemblFungi" id="SPBC4.06.1">
    <property type="protein sequence ID" value="SPBC4.06.1:pep"/>
    <property type="gene ID" value="SPBC4.06"/>
</dbReference>
<dbReference type="KEGG" id="spo:2540652"/>
<dbReference type="PomBase" id="SPBC4.06"/>
<dbReference type="VEuPathDB" id="FungiDB:SPBC4.06"/>
<dbReference type="eggNOG" id="KOG3720">
    <property type="taxonomic scope" value="Eukaryota"/>
</dbReference>
<dbReference type="HOGENOM" id="CLU_030431_3_1_1"/>
<dbReference type="InParanoid" id="Q9USS6"/>
<dbReference type="OMA" id="SWPPFTS"/>
<dbReference type="PhylomeDB" id="Q9USS6"/>
<dbReference type="Reactome" id="R-SPO-1483166">
    <property type="pathway name" value="Synthesis of PA"/>
</dbReference>
<dbReference type="Reactome" id="R-SPO-6798695">
    <property type="pathway name" value="Neutrophil degranulation"/>
</dbReference>
<dbReference type="PRO" id="PR:Q9USS6"/>
<dbReference type="Proteomes" id="UP000002485">
    <property type="component" value="Chromosome II"/>
</dbReference>
<dbReference type="GO" id="GO:0005739">
    <property type="term" value="C:mitochondrion"/>
    <property type="evidence" value="ECO:0007005"/>
    <property type="project" value="PomBase"/>
</dbReference>
<dbReference type="GO" id="GO:0003993">
    <property type="term" value="F:acid phosphatase activity"/>
    <property type="evidence" value="ECO:0000255"/>
    <property type="project" value="PomBase"/>
</dbReference>
<dbReference type="GO" id="GO:0016791">
    <property type="term" value="F:phosphatase activity"/>
    <property type="evidence" value="ECO:0000318"/>
    <property type="project" value="GO_Central"/>
</dbReference>
<dbReference type="GO" id="GO:0006644">
    <property type="term" value="P:phospholipid metabolic process"/>
    <property type="evidence" value="ECO:0000250"/>
    <property type="project" value="PomBase"/>
</dbReference>
<dbReference type="CDD" id="cd07061">
    <property type="entry name" value="HP_HAP_like"/>
    <property type="match status" value="1"/>
</dbReference>
<dbReference type="Gene3D" id="3.40.50.1240">
    <property type="entry name" value="Phosphoglycerate mutase-like"/>
    <property type="match status" value="1"/>
</dbReference>
<dbReference type="InterPro" id="IPR033379">
    <property type="entry name" value="Acid_Pase_AS"/>
</dbReference>
<dbReference type="InterPro" id="IPR000560">
    <property type="entry name" value="His_Pase_clade-2"/>
</dbReference>
<dbReference type="InterPro" id="IPR029033">
    <property type="entry name" value="His_PPase_superfam"/>
</dbReference>
<dbReference type="InterPro" id="IPR050645">
    <property type="entry name" value="Histidine_acid_phosphatase"/>
</dbReference>
<dbReference type="PANTHER" id="PTHR11567:SF110">
    <property type="entry name" value="2-PHOSPHOXYLOSE PHOSPHATASE 1"/>
    <property type="match status" value="1"/>
</dbReference>
<dbReference type="PANTHER" id="PTHR11567">
    <property type="entry name" value="ACID PHOSPHATASE-RELATED"/>
    <property type="match status" value="1"/>
</dbReference>
<dbReference type="Pfam" id="PF00328">
    <property type="entry name" value="His_Phos_2"/>
    <property type="match status" value="1"/>
</dbReference>
<dbReference type="SUPFAM" id="SSF53254">
    <property type="entry name" value="Phosphoglycerate mutase-like"/>
    <property type="match status" value="1"/>
</dbReference>
<dbReference type="PROSITE" id="PS00616">
    <property type="entry name" value="HIS_ACID_PHOSPHAT_1"/>
    <property type="match status" value="1"/>
</dbReference>
<evidence type="ECO:0000250" key="1">
    <source>
        <dbReference type="UniProtKB" id="P15309"/>
    </source>
</evidence>
<evidence type="ECO:0000250" key="2">
    <source>
        <dbReference type="UniProtKB" id="Q9NPH0"/>
    </source>
</evidence>
<evidence type="ECO:0000255" key="3"/>
<evidence type="ECO:0000269" key="4">
    <source>
    </source>
</evidence>
<evidence type="ECO:0000305" key="5"/>
<evidence type="ECO:0000312" key="6">
    <source>
        <dbReference type="EMBL" id="CAB58405.1"/>
    </source>
</evidence>
<protein>
    <recommendedName>
        <fullName>Probable acid phosphatase SPBC4.06</fullName>
        <ecNumber>3.1.3.2</ecNumber>
    </recommendedName>
</protein>
<proteinExistence type="inferred from homology"/>
<gene>
    <name type="ORF">SPBC4.06</name>
</gene>